<reference key="1">
    <citation type="journal article" date="1994" name="Yeast">
        <title>A 21.7 kb DNA segment on the left arm of yeast chromosome XIV carries WHI3, GCR2, SPX18, SPX19, an homologue to the heat shock gene SSB1 and 8 new open reading frames of unknown function.</title>
        <authorList>
            <person name="Jonniaux J.-L."/>
            <person name="Coster F."/>
            <person name="Purnelle B."/>
            <person name="Goffeau A."/>
        </authorList>
    </citation>
    <scope>NUCLEOTIDE SEQUENCE [GENOMIC DNA]</scope>
    <source>
        <strain>ATCC 96604 / S288c / FY1679</strain>
    </source>
</reference>
<reference key="2">
    <citation type="journal article" date="1997" name="Nature">
        <title>The nucleotide sequence of Saccharomyces cerevisiae chromosome XIV and its evolutionary implications.</title>
        <authorList>
            <person name="Philippsen P."/>
            <person name="Kleine K."/>
            <person name="Poehlmann R."/>
            <person name="Duesterhoeft A."/>
            <person name="Hamberg K."/>
            <person name="Hegemann J.H."/>
            <person name="Obermaier B."/>
            <person name="Urrestarazu L.A."/>
            <person name="Aert R."/>
            <person name="Albermann K."/>
            <person name="Altmann R."/>
            <person name="Andre B."/>
            <person name="Baladron V."/>
            <person name="Ballesta J.P.G."/>
            <person name="Becam A.-M."/>
            <person name="Beinhauer J.D."/>
            <person name="Boskovic J."/>
            <person name="Buitrago M.J."/>
            <person name="Bussereau F."/>
            <person name="Coster F."/>
            <person name="Crouzet M."/>
            <person name="D'Angelo M."/>
            <person name="Dal Pero F."/>
            <person name="De Antoni A."/>
            <person name="del Rey F."/>
            <person name="Doignon F."/>
            <person name="Domdey H."/>
            <person name="Dubois E."/>
            <person name="Fiedler T.A."/>
            <person name="Fleig U."/>
            <person name="Floeth M."/>
            <person name="Fritz C."/>
            <person name="Gaillardin C."/>
            <person name="Garcia-Cantalejo J.M."/>
            <person name="Glansdorff N."/>
            <person name="Goffeau A."/>
            <person name="Gueldener U."/>
            <person name="Herbert C.J."/>
            <person name="Heumann K."/>
            <person name="Heuss-Neitzel D."/>
            <person name="Hilbert H."/>
            <person name="Hinni K."/>
            <person name="Iraqui Houssaini I."/>
            <person name="Jacquet M."/>
            <person name="Jimenez A."/>
            <person name="Jonniaux J.-L."/>
            <person name="Karpfinger-Hartl L."/>
            <person name="Lanfranchi G."/>
            <person name="Lepingle A."/>
            <person name="Levesque H."/>
            <person name="Lyck R."/>
            <person name="Maftahi M."/>
            <person name="Mallet L."/>
            <person name="Maurer C.T.C."/>
            <person name="Messenguy F."/>
            <person name="Mewes H.-W."/>
            <person name="Moestl D."/>
            <person name="Nasr F."/>
            <person name="Nicaud J.-M."/>
            <person name="Niedenthal R.K."/>
            <person name="Pandolfo D."/>
            <person name="Pierard A."/>
            <person name="Piravandi E."/>
            <person name="Planta R.J."/>
            <person name="Pohl T.M."/>
            <person name="Purnelle B."/>
            <person name="Rebischung C."/>
            <person name="Remacha M.A."/>
            <person name="Revuelta J.L."/>
            <person name="Rinke M."/>
            <person name="Saiz J.E."/>
            <person name="Sartorello F."/>
            <person name="Scherens B."/>
            <person name="Sen-Gupta M."/>
            <person name="Soler-Mira A."/>
            <person name="Urbanus J.H.M."/>
            <person name="Valle G."/>
            <person name="Van Dyck L."/>
            <person name="Verhasselt P."/>
            <person name="Vierendeels F."/>
            <person name="Vissers S."/>
            <person name="Voet M."/>
            <person name="Volckaert G."/>
            <person name="Wach A."/>
            <person name="Wambutt R."/>
            <person name="Wedler H."/>
            <person name="Zollner A."/>
            <person name="Hani J."/>
        </authorList>
    </citation>
    <scope>NUCLEOTIDE SEQUENCE [LARGE SCALE GENOMIC DNA]</scope>
    <source>
        <strain>ATCC 204508 / S288c</strain>
    </source>
</reference>
<reference key="3">
    <citation type="journal article" date="2014" name="G3 (Bethesda)">
        <title>The reference genome sequence of Saccharomyces cerevisiae: Then and now.</title>
        <authorList>
            <person name="Engel S.R."/>
            <person name="Dietrich F.S."/>
            <person name="Fisk D.G."/>
            <person name="Binkley G."/>
            <person name="Balakrishnan R."/>
            <person name="Costanzo M.C."/>
            <person name="Dwight S.S."/>
            <person name="Hitz B.C."/>
            <person name="Karra K."/>
            <person name="Nash R.S."/>
            <person name="Weng S."/>
            <person name="Wong E.D."/>
            <person name="Lloyd P."/>
            <person name="Skrzypek M.S."/>
            <person name="Miyasato S.R."/>
            <person name="Simison M."/>
            <person name="Cherry J.M."/>
        </authorList>
    </citation>
    <scope>GENOME REANNOTATION</scope>
    <source>
        <strain>ATCC 204508 / S288c</strain>
    </source>
</reference>
<reference key="4">
    <citation type="journal article" date="2007" name="Genome Res.">
        <title>Approaching a complete repository of sequence-verified protein-encoding clones for Saccharomyces cerevisiae.</title>
        <authorList>
            <person name="Hu Y."/>
            <person name="Rolfs A."/>
            <person name="Bhullar B."/>
            <person name="Murthy T.V.S."/>
            <person name="Zhu C."/>
            <person name="Berger M.F."/>
            <person name="Camargo A.A."/>
            <person name="Kelley F."/>
            <person name="McCarron S."/>
            <person name="Jepson D."/>
            <person name="Richardson A."/>
            <person name="Raphael J."/>
            <person name="Moreira D."/>
            <person name="Taycher E."/>
            <person name="Zuo D."/>
            <person name="Mohr S."/>
            <person name="Kane M.F."/>
            <person name="Williamson J."/>
            <person name="Simpson A.J.G."/>
            <person name="Bulyk M.L."/>
            <person name="Harlow E."/>
            <person name="Marsischky G."/>
            <person name="Kolodner R.D."/>
            <person name="LaBaer J."/>
        </authorList>
    </citation>
    <scope>NUCLEOTIDE SEQUENCE [GENOMIC DNA]</scope>
    <source>
        <strain>ATCC 204508 / S288c</strain>
    </source>
</reference>
<feature type="chain" id="PRO_0000203393" description="Putative uncharacterized protein YNL205C">
    <location>
        <begin position="1"/>
        <end position="140"/>
    </location>
</feature>
<proteinExistence type="uncertain"/>
<protein>
    <recommendedName>
        <fullName>Putative uncharacterized protein YNL205C</fullName>
    </recommendedName>
</protein>
<evidence type="ECO:0000305" key="1"/>
<evidence type="ECO:0000305" key="2">
    <source>
    </source>
</evidence>
<accession>P40162</accession>
<organism>
    <name type="scientific">Saccharomyces cerevisiae (strain ATCC 204508 / S288c)</name>
    <name type="common">Baker's yeast</name>
    <dbReference type="NCBI Taxonomy" id="559292"/>
    <lineage>
        <taxon>Eukaryota</taxon>
        <taxon>Fungi</taxon>
        <taxon>Dikarya</taxon>
        <taxon>Ascomycota</taxon>
        <taxon>Saccharomycotina</taxon>
        <taxon>Saccharomycetes</taxon>
        <taxon>Saccharomycetales</taxon>
        <taxon>Saccharomycetaceae</taxon>
        <taxon>Saccharomyces</taxon>
    </lineage>
</organism>
<dbReference type="EMBL" id="Z71482">
    <property type="protein sequence ID" value="CAA96107.1"/>
    <property type="molecule type" value="Genomic_DNA"/>
</dbReference>
<dbReference type="EMBL" id="X78898">
    <property type="protein sequence ID" value="CAA55503.1"/>
    <property type="molecule type" value="Genomic_DNA"/>
</dbReference>
<dbReference type="EMBL" id="AY693306">
    <property type="protein sequence ID" value="AAT93325.1"/>
    <property type="molecule type" value="Genomic_DNA"/>
</dbReference>
<dbReference type="PIR" id="S50726">
    <property type="entry name" value="S50726"/>
</dbReference>
<dbReference type="DIP" id="DIP-4692N"/>
<dbReference type="IntAct" id="P40162">
    <property type="interactions" value="1"/>
</dbReference>
<dbReference type="PaxDb" id="4932-YNL205C"/>
<dbReference type="EnsemblFungi" id="YNL205C_mRNA">
    <property type="protein sequence ID" value="YNL205C"/>
    <property type="gene ID" value="YNL205C"/>
</dbReference>
<dbReference type="AGR" id="SGD:S000005149"/>
<dbReference type="SGD" id="S000005149">
    <property type="gene designation" value="YNL205C"/>
</dbReference>
<dbReference type="HOGENOM" id="CLU_1836696_0_0_1"/>
<sequence>MHYTNHTKTLKARLFSQRLKTFNKGICRMISRDHSCTLTRSCMKRPIYPRQFFLVLLGETFSLQNSIRHHKNICFKNLNINEFYFFIFISWVTPLVNDASCFFFSSNIRYSALVCSNNYDVKVLETLTKKPLFKRKVLQI</sequence>
<comment type="miscellaneous">
    <text evidence="1">Partially overlaps SPS18.</text>
</comment>
<comment type="caution">
    <text evidence="2">Product of a dubious gene prediction unlikely to encode a functional protein. Because of that it is not part of the S.cerevisiae S288c complete/reference proteome set.</text>
</comment>
<gene>
    <name type="ordered locus">YNL205C</name>
    <name type="ORF">N1350</name>
</gene>
<name>YNU5_YEAST</name>